<reference key="1">
    <citation type="journal article" date="2004" name="Nature">
        <title>Genome evolution in yeasts.</title>
        <authorList>
            <person name="Dujon B."/>
            <person name="Sherman D."/>
            <person name="Fischer G."/>
            <person name="Durrens P."/>
            <person name="Casaregola S."/>
            <person name="Lafontaine I."/>
            <person name="de Montigny J."/>
            <person name="Marck C."/>
            <person name="Neuveglise C."/>
            <person name="Talla E."/>
            <person name="Goffard N."/>
            <person name="Frangeul L."/>
            <person name="Aigle M."/>
            <person name="Anthouard V."/>
            <person name="Babour A."/>
            <person name="Barbe V."/>
            <person name="Barnay S."/>
            <person name="Blanchin S."/>
            <person name="Beckerich J.-M."/>
            <person name="Beyne E."/>
            <person name="Bleykasten C."/>
            <person name="Boisrame A."/>
            <person name="Boyer J."/>
            <person name="Cattolico L."/>
            <person name="Confanioleri F."/>
            <person name="de Daruvar A."/>
            <person name="Despons L."/>
            <person name="Fabre E."/>
            <person name="Fairhead C."/>
            <person name="Ferry-Dumazet H."/>
            <person name="Groppi A."/>
            <person name="Hantraye F."/>
            <person name="Hennequin C."/>
            <person name="Jauniaux N."/>
            <person name="Joyet P."/>
            <person name="Kachouri R."/>
            <person name="Kerrest A."/>
            <person name="Koszul R."/>
            <person name="Lemaire M."/>
            <person name="Lesur I."/>
            <person name="Ma L."/>
            <person name="Muller H."/>
            <person name="Nicaud J.-M."/>
            <person name="Nikolski M."/>
            <person name="Oztas S."/>
            <person name="Ozier-Kalogeropoulos O."/>
            <person name="Pellenz S."/>
            <person name="Potier S."/>
            <person name="Richard G.-F."/>
            <person name="Straub M.-L."/>
            <person name="Suleau A."/>
            <person name="Swennen D."/>
            <person name="Tekaia F."/>
            <person name="Wesolowski-Louvel M."/>
            <person name="Westhof E."/>
            <person name="Wirth B."/>
            <person name="Zeniou-Meyer M."/>
            <person name="Zivanovic Y."/>
            <person name="Bolotin-Fukuhara M."/>
            <person name="Thierry A."/>
            <person name="Bouchier C."/>
            <person name="Caudron B."/>
            <person name="Scarpelli C."/>
            <person name="Gaillardin C."/>
            <person name="Weissenbach J."/>
            <person name="Wincker P."/>
            <person name="Souciet J.-L."/>
        </authorList>
    </citation>
    <scope>NUCLEOTIDE SEQUENCE [LARGE SCALE GENOMIC DNA]</scope>
    <source>
        <strain>ATCC 8585 / CBS 2359 / DSM 70799 / NBRC 1267 / NRRL Y-1140 / WM37</strain>
    </source>
</reference>
<proteinExistence type="inferred from homology"/>
<dbReference type="EMBL" id="CR382126">
    <property type="protein sequence ID" value="CAG98909.1"/>
    <property type="molecule type" value="Genomic_DNA"/>
</dbReference>
<dbReference type="RefSeq" id="XP_456201.1">
    <property type="nucleotide sequence ID" value="XM_456201.1"/>
</dbReference>
<dbReference type="SMR" id="Q6CIN8"/>
<dbReference type="FunCoup" id="Q6CIN8">
    <property type="interactions" value="295"/>
</dbReference>
<dbReference type="STRING" id="284590.Q6CIN8"/>
<dbReference type="PaxDb" id="284590-Q6CIN8"/>
<dbReference type="KEGG" id="kla:KLLA0_F25146g"/>
<dbReference type="eggNOG" id="KOG2261">
    <property type="taxonomic scope" value="Eukaryota"/>
</dbReference>
<dbReference type="HOGENOM" id="CLU_010580_0_0_1"/>
<dbReference type="InParanoid" id="Q6CIN8"/>
<dbReference type="OMA" id="MLGTKSY"/>
<dbReference type="Proteomes" id="UP000000598">
    <property type="component" value="Chromosome F"/>
</dbReference>
<dbReference type="GO" id="GO:0035267">
    <property type="term" value="C:NuA4 histone acetyltransferase complex"/>
    <property type="evidence" value="ECO:0007669"/>
    <property type="project" value="InterPro"/>
</dbReference>
<dbReference type="GO" id="GO:0005634">
    <property type="term" value="C:nucleus"/>
    <property type="evidence" value="ECO:0007669"/>
    <property type="project" value="UniProtKB-SubCell"/>
</dbReference>
<dbReference type="GO" id="GO:0006281">
    <property type="term" value="P:DNA repair"/>
    <property type="evidence" value="ECO:0007669"/>
    <property type="project" value="UniProtKB-KW"/>
</dbReference>
<dbReference type="GO" id="GO:0006357">
    <property type="term" value="P:regulation of transcription by RNA polymerase II"/>
    <property type="evidence" value="ECO:0007669"/>
    <property type="project" value="InterPro"/>
</dbReference>
<dbReference type="InterPro" id="IPR024943">
    <property type="entry name" value="Enhancer_polycomb"/>
</dbReference>
<dbReference type="InterPro" id="IPR019542">
    <property type="entry name" value="Enhancer_polycomb-like_N"/>
</dbReference>
<dbReference type="PANTHER" id="PTHR14898">
    <property type="entry name" value="ENHANCER OF POLYCOMB"/>
    <property type="match status" value="1"/>
</dbReference>
<dbReference type="Pfam" id="PF10513">
    <property type="entry name" value="EPL1"/>
    <property type="match status" value="1"/>
</dbReference>
<comment type="function">
    <text evidence="1">Component of the NuA4 histone acetyltransferase complex which is involved in transcriptional activation of selected genes principally by acetylation of nucleosomal histone H4 and H2A. The NuA4 complex is also involved in DNA repair. Involved in gene silencing by neighboring heterochromatin, blockage of the silencing spreading along the chromosome, and required for cell cycle progression through G2/M (By similarity).</text>
</comment>
<comment type="subunit">
    <text evidence="1">Component of the NuA4 histone acetyltransferase complex.</text>
</comment>
<comment type="subcellular location">
    <subcellularLocation>
        <location evidence="1">Nucleus</location>
    </subcellularLocation>
</comment>
<comment type="similarity">
    <text evidence="3">Belongs to the enhancer of polycomb family.</text>
</comment>
<evidence type="ECO:0000250" key="1"/>
<evidence type="ECO:0000256" key="2">
    <source>
        <dbReference type="SAM" id="MobiDB-lite"/>
    </source>
</evidence>
<evidence type="ECO:0000305" key="3"/>
<gene>
    <name type="primary">EPL1</name>
    <name type="ordered locus">KLLA0F25146g</name>
</gene>
<organism>
    <name type="scientific">Kluyveromyces lactis (strain ATCC 8585 / CBS 2359 / DSM 70799 / NBRC 1267 / NRRL Y-1140 / WM37)</name>
    <name type="common">Yeast</name>
    <name type="synonym">Candida sphaerica</name>
    <dbReference type="NCBI Taxonomy" id="284590"/>
    <lineage>
        <taxon>Eukaryota</taxon>
        <taxon>Fungi</taxon>
        <taxon>Dikarya</taxon>
        <taxon>Ascomycota</taxon>
        <taxon>Saccharomycotina</taxon>
        <taxon>Saccharomycetes</taxon>
        <taxon>Saccharomycetales</taxon>
        <taxon>Saccharomycetaceae</taxon>
        <taxon>Kluyveromyces</taxon>
    </lineage>
</organism>
<name>EPL1_KLULA</name>
<protein>
    <recommendedName>
        <fullName>Enhancer of polycomb-like protein 1</fullName>
    </recommendedName>
</protein>
<accession>Q6CIN8</accession>
<feature type="chain" id="PRO_0000214163" description="Enhancer of polycomb-like protein 1">
    <location>
        <begin position="1"/>
        <end position="806"/>
    </location>
</feature>
<feature type="region of interest" description="Disordered" evidence="2">
    <location>
        <begin position="403"/>
        <end position="461"/>
    </location>
</feature>
<feature type="region of interest" description="Disordered" evidence="2">
    <location>
        <begin position="751"/>
        <end position="806"/>
    </location>
</feature>
<feature type="compositionally biased region" description="Basic residues" evidence="2">
    <location>
        <begin position="411"/>
        <end position="420"/>
    </location>
</feature>
<feature type="compositionally biased region" description="Basic and acidic residues" evidence="2">
    <location>
        <begin position="421"/>
        <end position="439"/>
    </location>
</feature>
<feature type="compositionally biased region" description="Low complexity" evidence="2">
    <location>
        <begin position="751"/>
        <end position="779"/>
    </location>
</feature>
<feature type="compositionally biased region" description="Polar residues" evidence="2">
    <location>
        <begin position="785"/>
        <end position="795"/>
    </location>
</feature>
<keyword id="KW-0131">Cell cycle</keyword>
<keyword id="KW-0227">DNA damage</keyword>
<keyword id="KW-0234">DNA repair</keyword>
<keyword id="KW-0539">Nucleus</keyword>
<keyword id="KW-1185">Reference proteome</keyword>
<keyword id="KW-0804">Transcription</keyword>
<keyword id="KW-0805">Transcription regulation</keyword>
<sequence>MPAPAVDSSRFRHRKISVKQRLRIYKSHEIKDLEQEDVSAISSQHQQRELMEIETGVEKNEEKEEHLYKILQSNQLRENKKDLFIPTPDASKTWDEFDRFYQGEFKCPTSYIQFSAQLEDCCGTLYNMDEEDEIFLADLNKSLADSVEPLTEDEFELIMANFESSIKDRQPFLSMDPESILSFADLKPTMLKNDVGDSGVKKELAKEIGMPEDEPFLTMFDNKRPLGKREKNMETLIELFGEKIHDHWKQRKISRHGCDIFPQLKSERNNDKDDNDPYVCFRRRELRQPRKTRRIDVQNSQKLRLLCQQLEYTKDLALTVAKRERAVLEVLENEKFVFQARAQLKTMKRKLGIDADNEDLYSAKKQKLVSSVRTIKQQQQLLLQKQLQIQQQQQQQLQQQQAAITSDSSVKRAKSSKSSKLHKEDSGLYADEKGSEPKKKGPKTGSNKNKEQSLSSAQEIGAQSPVANVSNVQQQQKQASSQVYVKLPNSKIPDIVLEDVGKLLHSKEKSTRKFVEDRMRKRKQEDGDIFFNLTDDPYNPVFNLSIPDNVSPQDAPFSSVAGSKFEVKTSYYSPNLQNYITGTANDIKVFNKEGEAVENNEYKKLEFFNPFDNEIHTHSREFPIAFRRRRGRFNMEYIDQRKTDHNINDMLLQFIDLDGIQKQELDNDVINVYDSKLDDLSRSYYHWKYDSNYNIYGSKFSDEPAKLNQISNDTQVVRFGTMLGSKAYEQLRDATIKYRQEQINKRKKLNSLQQQQMLQKGQQPINNAPHSQSSSPPSHQDTRKNPGSTPNQSSPPKKHVTPNAAA</sequence>